<protein>
    <recommendedName>
        <fullName>Protein MGF 360-11L</fullName>
    </recommendedName>
</protein>
<feature type="chain" id="PRO_0000373279" description="Protein MGF 360-11L">
    <location>
        <begin position="1"/>
        <end position="353"/>
    </location>
</feature>
<reference key="1">
    <citation type="journal article" date="1994" name="Virology">
        <title>Two novel multigene families, 530 and 300, in the terminal variable regions of African swine fever virus genome.</title>
        <authorList>
            <person name="Yozawa T."/>
            <person name="Kutish G.F."/>
            <person name="Afonso C.L."/>
            <person name="Lu Z."/>
            <person name="Rock D.L."/>
        </authorList>
    </citation>
    <scope>NUCLEOTIDE SEQUENCE [GENOMIC DNA]</scope>
</reference>
<reference key="2">
    <citation type="submission" date="2003-03" db="EMBL/GenBank/DDBJ databases">
        <title>African swine fever virus genomes.</title>
        <authorList>
            <person name="Kutish G.F."/>
            <person name="Rock D.L."/>
        </authorList>
    </citation>
    <scope>NUCLEOTIDE SEQUENCE [LARGE SCALE GENOMIC DNA]</scope>
</reference>
<proteinExistence type="inferred from homology"/>
<organismHost>
    <name type="scientific">Ornithodoros</name>
    <name type="common">relapsing fever ticks</name>
    <dbReference type="NCBI Taxonomy" id="6937"/>
</organismHost>
<organismHost>
    <name type="scientific">Phacochoerus aethiopicus</name>
    <name type="common">Warthog</name>
    <dbReference type="NCBI Taxonomy" id="85517"/>
</organismHost>
<organismHost>
    <name type="scientific">Phacochoerus africanus</name>
    <name type="common">Warthog</name>
    <dbReference type="NCBI Taxonomy" id="41426"/>
</organismHost>
<organismHost>
    <name type="scientific">Potamochoerus larvatus</name>
    <name type="common">Bushpig</name>
    <dbReference type="NCBI Taxonomy" id="273792"/>
</organismHost>
<organismHost>
    <name type="scientific">Sus scrofa</name>
    <name type="common">Pig</name>
    <dbReference type="NCBI Taxonomy" id="9823"/>
</organismHost>
<comment type="function">
    <text evidence="1">Plays a role in virus cell tropism, and may be required for efficient virus replication in macrophages. In addition, inhibits the phosphorylation of host TBK1 and IRF7 and thereby negatively regulates the host cGAS signaling pathway and antagonizes IFN-mediated antiviral activity.</text>
</comment>
<comment type="subunit">
    <text evidence="1">Interacts with host TBK1 ad IRF7.</text>
</comment>
<comment type="similarity">
    <text evidence="2">Belongs to the asfivirus MGF 360 family.</text>
</comment>
<accession>Q65123</accession>
<keyword id="KW-0945">Host-virus interaction</keyword>
<keyword id="KW-1090">Inhibition of host innate immune response by virus</keyword>
<keyword id="KW-1093">Inhibition of host IRF7 by virus</keyword>
<keyword id="KW-1113">Inhibition of host RLR pathway by virus</keyword>
<keyword id="KW-1223">Inhibition of host TBK1 by virus</keyword>
<keyword id="KW-1225">Inhibition of host TLR pathway by virus</keyword>
<keyword id="KW-0899">Viral immunoevasion</keyword>
<gene>
    <name type="ordered locus">Mal-030</name>
    <name type="ORF">LMW3EL</name>
</gene>
<organism>
    <name type="scientific">African swine fever virus (isolate Tick/Malawi/Lil 20-1/1983)</name>
    <name type="common">ASFV</name>
    <dbReference type="NCBI Taxonomy" id="10500"/>
    <lineage>
        <taxon>Viruses</taxon>
        <taxon>Varidnaviria</taxon>
        <taxon>Bamfordvirae</taxon>
        <taxon>Nucleocytoviricota</taxon>
        <taxon>Pokkesviricetes</taxon>
        <taxon>Asfuvirales</taxon>
        <taxon>Asfarviridae</taxon>
        <taxon>Asfivirus</taxon>
        <taxon>African swine fever virus</taxon>
    </lineage>
</organism>
<name>36011_ASFM2</name>
<sequence>MLPSLQSLTKKVLAKQCVPVDQYHVLKCCGLWWYDGPITFYVYRHKMFIRSTCFSEGIELNTVLMKAAKENNHDLIRLFAEWGADINYGLICAHTEHTRNLCRELGAKDRLDRDYILKIFFDTTRNKTDSNIILCHEMFSNNPNLKNVDNLDLREEIMWELRGLMEITYMLDHDNSFSNMLTKYWYAIAVDYGLKKAIHYFYQRYTHLHHWRLMCALFYNNVFDLHELYVIERVRMDIDEMMHIACVQDYSYAAIYYCFIMGANINQAMLVSIQNYNLGNMFFCIDLGANAFEEGKALAEQKENYLIADALSLKHYNPVISLLSVIMDPEKINCMLKNYHSINMRVFLDYERR</sequence>
<evidence type="ECO:0000250" key="1">
    <source>
        <dbReference type="UniProtKB" id="P0C9P6"/>
    </source>
</evidence>
<evidence type="ECO:0000305" key="2"/>
<dbReference type="EMBL" id="U03762">
    <property type="protein sequence ID" value="AAA50536.1"/>
    <property type="molecule type" value="Genomic_DNA"/>
</dbReference>
<dbReference type="EMBL" id="AY261361">
    <property type="status" value="NOT_ANNOTATED_CDS"/>
    <property type="molecule type" value="Genomic_DNA"/>
</dbReference>
<dbReference type="SMR" id="Q65123"/>
<dbReference type="Proteomes" id="UP000000860">
    <property type="component" value="Segment"/>
</dbReference>
<dbReference type="GO" id="GO:0039557">
    <property type="term" value="P:symbiont-mediated suppression of host cytoplasmic pattern recognition receptor signaling pathway via inhibition of IRF7 activity"/>
    <property type="evidence" value="ECO:0007669"/>
    <property type="project" value="UniProtKB-KW"/>
</dbReference>
<dbReference type="GO" id="GO:0039723">
    <property type="term" value="P:symbiont-mediated suppression of host cytoplasmic pattern recognition receptor signaling pathway via inhibition of TBK1 activity"/>
    <property type="evidence" value="ECO:0007669"/>
    <property type="project" value="UniProtKB-KW"/>
</dbReference>
<dbReference type="GO" id="GO:0039722">
    <property type="term" value="P:symbiont-mediated suppression of host toll-like receptor signaling pathway"/>
    <property type="evidence" value="ECO:0007669"/>
    <property type="project" value="UniProtKB-KW"/>
</dbReference>
<dbReference type="GO" id="GO:0042330">
    <property type="term" value="P:taxis"/>
    <property type="evidence" value="ECO:0007669"/>
    <property type="project" value="InterPro"/>
</dbReference>
<dbReference type="InterPro" id="IPR002595">
    <property type="entry name" value="ASFV_MGF360"/>
</dbReference>
<dbReference type="Pfam" id="PF01671">
    <property type="entry name" value="ASFV_360"/>
    <property type="match status" value="1"/>
</dbReference>